<name>VPS3_YEAST</name>
<keyword id="KW-0002">3D-structure</keyword>
<keyword id="KW-0963">Cytoplasm</keyword>
<keyword id="KW-1185">Reference proteome</keyword>
<organism>
    <name type="scientific">Saccharomyces cerevisiae (strain ATCC 204508 / S288c)</name>
    <name type="common">Baker's yeast</name>
    <dbReference type="NCBI Taxonomy" id="559292"/>
    <lineage>
        <taxon>Eukaryota</taxon>
        <taxon>Fungi</taxon>
        <taxon>Dikarya</taxon>
        <taxon>Ascomycota</taxon>
        <taxon>Saccharomycotina</taxon>
        <taxon>Saccharomycetes</taxon>
        <taxon>Saccharomycetales</taxon>
        <taxon>Saccharomycetaceae</taxon>
        <taxon>Saccharomyces</taxon>
    </lineage>
</organism>
<evidence type="ECO:0000255" key="1">
    <source>
        <dbReference type="PROSITE-ProRule" id="PRU00795"/>
    </source>
</evidence>
<evidence type="ECO:0000256" key="2">
    <source>
        <dbReference type="SAM" id="MobiDB-lite"/>
    </source>
</evidence>
<evidence type="ECO:0000269" key="3">
    <source>
    </source>
</evidence>
<evidence type="ECO:0000305" key="4"/>
<gene>
    <name type="primary">VPS3</name>
    <name type="synonym">VPT17</name>
    <name type="ordered locus">YDR495C</name>
    <name type="ORF">D9719.1</name>
</gene>
<accession>P23643</accession>
<accession>D6VTB7</accession>
<dbReference type="EMBL" id="X53871">
    <property type="protein sequence ID" value="CAA37865.1"/>
    <property type="molecule type" value="Genomic_DNA"/>
</dbReference>
<dbReference type="EMBL" id="U33057">
    <property type="protein sequence ID" value="AAB64937.1"/>
    <property type="molecule type" value="Genomic_DNA"/>
</dbReference>
<dbReference type="EMBL" id="BK006938">
    <property type="protein sequence ID" value="DAA12327.1"/>
    <property type="molecule type" value="Genomic_DNA"/>
</dbReference>
<dbReference type="PIR" id="S11177">
    <property type="entry name" value="S11177"/>
</dbReference>
<dbReference type="RefSeq" id="NP_010783.3">
    <property type="nucleotide sequence ID" value="NM_001180803.3"/>
</dbReference>
<dbReference type="PDB" id="8QX8">
    <property type="method" value="EM"/>
    <property type="resolution" value="4.60 A"/>
    <property type="chains" value="E=1-1011"/>
</dbReference>
<dbReference type="PDBsum" id="8QX8"/>
<dbReference type="EMDB" id="EMD-18701"/>
<dbReference type="SMR" id="P23643"/>
<dbReference type="BioGRID" id="32546">
    <property type="interactions" value="143"/>
</dbReference>
<dbReference type="ComplexPortal" id="CPX-1626">
    <property type="entry name" value="CORVET tethering complex"/>
</dbReference>
<dbReference type="ELM" id="P23643"/>
<dbReference type="FunCoup" id="P23643">
    <property type="interactions" value="100"/>
</dbReference>
<dbReference type="IntAct" id="P23643">
    <property type="interactions" value="8"/>
</dbReference>
<dbReference type="MINT" id="P23643"/>
<dbReference type="STRING" id="4932.YDR495C"/>
<dbReference type="iPTMnet" id="P23643"/>
<dbReference type="PaxDb" id="4932-YDR495C"/>
<dbReference type="PeptideAtlas" id="P23643"/>
<dbReference type="EnsemblFungi" id="YDR495C_mRNA">
    <property type="protein sequence ID" value="YDR495C"/>
    <property type="gene ID" value="YDR495C"/>
</dbReference>
<dbReference type="GeneID" id="852106"/>
<dbReference type="KEGG" id="sce:YDR495C"/>
<dbReference type="AGR" id="SGD:S000002903"/>
<dbReference type="SGD" id="S000002903">
    <property type="gene designation" value="VPS3"/>
</dbReference>
<dbReference type="VEuPathDB" id="FungiDB:YDR495C"/>
<dbReference type="eggNOG" id="KOG2063">
    <property type="taxonomic scope" value="Eukaryota"/>
</dbReference>
<dbReference type="GeneTree" id="ENSGT00530000063596"/>
<dbReference type="HOGENOM" id="CLU_005205_0_0_1"/>
<dbReference type="InParanoid" id="P23643"/>
<dbReference type="OMA" id="EFAPVPN"/>
<dbReference type="OrthoDB" id="5325112at2759"/>
<dbReference type="BioCyc" id="YEAST:G3O-30018-MONOMER"/>
<dbReference type="BioGRID-ORCS" id="852106">
    <property type="hits" value="2 hits in 10 CRISPR screens"/>
</dbReference>
<dbReference type="PRO" id="PR:P23643"/>
<dbReference type="Proteomes" id="UP000002311">
    <property type="component" value="Chromosome IV"/>
</dbReference>
<dbReference type="RNAct" id="P23643">
    <property type="molecule type" value="protein"/>
</dbReference>
<dbReference type="GO" id="GO:0033263">
    <property type="term" value="C:CORVET complex"/>
    <property type="evidence" value="ECO:0000314"/>
    <property type="project" value="SGD"/>
</dbReference>
<dbReference type="GO" id="GO:0005737">
    <property type="term" value="C:cytoplasm"/>
    <property type="evidence" value="ECO:0000318"/>
    <property type="project" value="GO_Central"/>
</dbReference>
<dbReference type="GO" id="GO:0031901">
    <property type="term" value="C:early endosome membrane"/>
    <property type="evidence" value="ECO:0000314"/>
    <property type="project" value="ComplexPortal"/>
</dbReference>
<dbReference type="GO" id="GO:0005768">
    <property type="term" value="C:endosome"/>
    <property type="evidence" value="ECO:0000314"/>
    <property type="project" value="SGD"/>
</dbReference>
<dbReference type="GO" id="GO:0000329">
    <property type="term" value="C:fungal-type vacuole membrane"/>
    <property type="evidence" value="ECO:0000318"/>
    <property type="project" value="GO_Central"/>
</dbReference>
<dbReference type="GO" id="GO:0006914">
    <property type="term" value="P:autophagy"/>
    <property type="evidence" value="ECO:0000318"/>
    <property type="project" value="GO_Central"/>
</dbReference>
<dbReference type="GO" id="GO:0034058">
    <property type="term" value="P:endosomal vesicle fusion"/>
    <property type="evidence" value="ECO:0000318"/>
    <property type="project" value="GO_Central"/>
</dbReference>
<dbReference type="GO" id="GO:0006623">
    <property type="term" value="P:protein targeting to vacuole"/>
    <property type="evidence" value="ECO:0000315"/>
    <property type="project" value="SGD"/>
</dbReference>
<dbReference type="GO" id="GO:0032889">
    <property type="term" value="P:regulation of vacuole fusion, non-autophagic"/>
    <property type="evidence" value="ECO:0000314"/>
    <property type="project" value="ComplexPortal"/>
</dbReference>
<dbReference type="GO" id="GO:0007035">
    <property type="term" value="P:vacuolar acidification"/>
    <property type="evidence" value="ECO:0000315"/>
    <property type="project" value="SGD"/>
</dbReference>
<dbReference type="GO" id="GO:0000011">
    <property type="term" value="P:vacuole inheritance"/>
    <property type="evidence" value="ECO:0000315"/>
    <property type="project" value="SGD"/>
</dbReference>
<dbReference type="GO" id="GO:0099022">
    <property type="term" value="P:vesicle tethering"/>
    <property type="evidence" value="ECO:0000314"/>
    <property type="project" value="ComplexPortal"/>
</dbReference>
<dbReference type="InterPro" id="IPR001180">
    <property type="entry name" value="CNH_dom"/>
</dbReference>
<dbReference type="InterPro" id="IPR032914">
    <property type="entry name" value="Vam6/VPS39/TRAP1"/>
</dbReference>
<dbReference type="PANTHER" id="PTHR12894">
    <property type="entry name" value="CNH DOMAIN CONTAINING"/>
    <property type="match status" value="1"/>
</dbReference>
<dbReference type="PANTHER" id="PTHR12894:SF28">
    <property type="entry name" value="VACUOLAR PROTEIN SORTING-ASSOCIATED PROTEIN 3"/>
    <property type="match status" value="1"/>
</dbReference>
<dbReference type="PROSITE" id="PS50219">
    <property type="entry name" value="CNH"/>
    <property type="match status" value="1"/>
</dbReference>
<comment type="function">
    <text>Required for sorting and processing of soluble vacuolar proteins, integrity of vacuolar morphology, efficient segregation of vacuolar material into the bud during the cell cycle, acidification of the vacuolar lumen, and assembly of the vacuolar H(+)-ATPase.</text>
</comment>
<comment type="subcellular location">
    <subcellularLocation>
        <location>Cytoplasm</location>
    </subcellularLocation>
</comment>
<comment type="miscellaneous">
    <text evidence="3">Present with 2270 molecules/cell in log phase SD medium.</text>
</comment>
<comment type="similarity">
    <text evidence="4">Belongs to the VPS3 family.</text>
</comment>
<reference key="1">
    <citation type="journal article" date="1990" name="J. Cell Biol.">
        <title>Molecular analysis of the yeast VPS3 gene and the role of its product in vacuolar protein sorting and vacuolar segregation during the cell cycle.</title>
        <authorList>
            <person name="Raymond C.K."/>
            <person name="O'Hara P.J."/>
            <person name="Eichinger G."/>
            <person name="Rothman J.H."/>
            <person name="Stevens T.H."/>
        </authorList>
    </citation>
    <scope>NUCLEOTIDE SEQUENCE [GENOMIC DNA]</scope>
</reference>
<reference key="2">
    <citation type="journal article" date="1997" name="Nature">
        <title>The nucleotide sequence of Saccharomyces cerevisiae chromosome IV.</title>
        <authorList>
            <person name="Jacq C."/>
            <person name="Alt-Moerbe J."/>
            <person name="Andre B."/>
            <person name="Arnold W."/>
            <person name="Bahr A."/>
            <person name="Ballesta J.P.G."/>
            <person name="Bargues M."/>
            <person name="Baron L."/>
            <person name="Becker A."/>
            <person name="Biteau N."/>
            <person name="Bloecker H."/>
            <person name="Blugeon C."/>
            <person name="Boskovic J."/>
            <person name="Brandt P."/>
            <person name="Brueckner M."/>
            <person name="Buitrago M.J."/>
            <person name="Coster F."/>
            <person name="Delaveau T."/>
            <person name="del Rey F."/>
            <person name="Dujon B."/>
            <person name="Eide L.G."/>
            <person name="Garcia-Cantalejo J.M."/>
            <person name="Goffeau A."/>
            <person name="Gomez-Peris A."/>
            <person name="Granotier C."/>
            <person name="Hanemann V."/>
            <person name="Hankeln T."/>
            <person name="Hoheisel J.D."/>
            <person name="Jaeger W."/>
            <person name="Jimenez A."/>
            <person name="Jonniaux J.-L."/>
            <person name="Kraemer C."/>
            <person name="Kuester H."/>
            <person name="Laamanen P."/>
            <person name="Legros Y."/>
            <person name="Louis E.J."/>
            <person name="Moeller-Rieker S."/>
            <person name="Monnet A."/>
            <person name="Moro M."/>
            <person name="Mueller-Auer S."/>
            <person name="Nussbaumer B."/>
            <person name="Paricio N."/>
            <person name="Paulin L."/>
            <person name="Perea J."/>
            <person name="Perez-Alonso M."/>
            <person name="Perez-Ortin J.E."/>
            <person name="Pohl T.M."/>
            <person name="Prydz H."/>
            <person name="Purnelle B."/>
            <person name="Rasmussen S.W."/>
            <person name="Remacha M.A."/>
            <person name="Revuelta J.L."/>
            <person name="Rieger M."/>
            <person name="Salom D."/>
            <person name="Saluz H.P."/>
            <person name="Saiz J.E."/>
            <person name="Saren A.-M."/>
            <person name="Schaefer M."/>
            <person name="Scharfe M."/>
            <person name="Schmidt E.R."/>
            <person name="Schneider C."/>
            <person name="Scholler P."/>
            <person name="Schwarz S."/>
            <person name="Soler-Mira A."/>
            <person name="Urrestarazu L.A."/>
            <person name="Verhasselt P."/>
            <person name="Vissers S."/>
            <person name="Voet M."/>
            <person name="Volckaert G."/>
            <person name="Wagner G."/>
            <person name="Wambutt R."/>
            <person name="Wedler E."/>
            <person name="Wedler H."/>
            <person name="Woelfl S."/>
            <person name="Harris D.E."/>
            <person name="Bowman S."/>
            <person name="Brown D."/>
            <person name="Churcher C.M."/>
            <person name="Connor R."/>
            <person name="Dedman K."/>
            <person name="Gentles S."/>
            <person name="Hamlin N."/>
            <person name="Hunt S."/>
            <person name="Jones L."/>
            <person name="McDonald S."/>
            <person name="Murphy L.D."/>
            <person name="Niblett D."/>
            <person name="Odell C."/>
            <person name="Oliver K."/>
            <person name="Rajandream M.A."/>
            <person name="Richards C."/>
            <person name="Shore L."/>
            <person name="Walsh S.V."/>
            <person name="Barrell B.G."/>
            <person name="Dietrich F.S."/>
            <person name="Mulligan J.T."/>
            <person name="Allen E."/>
            <person name="Araujo R."/>
            <person name="Aviles E."/>
            <person name="Berno A."/>
            <person name="Carpenter J."/>
            <person name="Chen E."/>
            <person name="Cherry J.M."/>
            <person name="Chung E."/>
            <person name="Duncan M."/>
            <person name="Hunicke-Smith S."/>
            <person name="Hyman R.W."/>
            <person name="Komp C."/>
            <person name="Lashkari D."/>
            <person name="Lew H."/>
            <person name="Lin D."/>
            <person name="Mosedale D."/>
            <person name="Nakahara K."/>
            <person name="Namath A."/>
            <person name="Oefner P."/>
            <person name="Oh C."/>
            <person name="Petel F.X."/>
            <person name="Roberts D."/>
            <person name="Schramm S."/>
            <person name="Schroeder M."/>
            <person name="Shogren T."/>
            <person name="Shroff N."/>
            <person name="Winant A."/>
            <person name="Yelton M.A."/>
            <person name="Botstein D."/>
            <person name="Davis R.W."/>
            <person name="Johnston M."/>
            <person name="Andrews S."/>
            <person name="Brinkman R."/>
            <person name="Cooper J."/>
            <person name="Ding H."/>
            <person name="Du Z."/>
            <person name="Favello A."/>
            <person name="Fulton L."/>
            <person name="Gattung S."/>
            <person name="Greco T."/>
            <person name="Hallsworth K."/>
            <person name="Hawkins J."/>
            <person name="Hillier L.W."/>
            <person name="Jier M."/>
            <person name="Johnson D."/>
            <person name="Johnston L."/>
            <person name="Kirsten J."/>
            <person name="Kucaba T."/>
            <person name="Langston Y."/>
            <person name="Latreille P."/>
            <person name="Le T."/>
            <person name="Mardis E."/>
            <person name="Menezes S."/>
            <person name="Miller N."/>
            <person name="Nhan M."/>
            <person name="Pauley A."/>
            <person name="Peluso D."/>
            <person name="Rifkin L."/>
            <person name="Riles L."/>
            <person name="Taich A."/>
            <person name="Trevaskis E."/>
            <person name="Vignati D."/>
            <person name="Wilcox L."/>
            <person name="Wohldman P."/>
            <person name="Vaudin M."/>
            <person name="Wilson R."/>
            <person name="Waterston R."/>
            <person name="Albermann K."/>
            <person name="Hani J."/>
            <person name="Heumann K."/>
            <person name="Kleine K."/>
            <person name="Mewes H.-W."/>
            <person name="Zollner A."/>
            <person name="Zaccaria P."/>
        </authorList>
    </citation>
    <scope>NUCLEOTIDE SEQUENCE [LARGE SCALE GENOMIC DNA]</scope>
    <source>
        <strain>ATCC 204508 / S288c</strain>
    </source>
</reference>
<reference key="3">
    <citation type="journal article" date="2014" name="G3 (Bethesda)">
        <title>The reference genome sequence of Saccharomyces cerevisiae: Then and now.</title>
        <authorList>
            <person name="Engel S.R."/>
            <person name="Dietrich F.S."/>
            <person name="Fisk D.G."/>
            <person name="Binkley G."/>
            <person name="Balakrishnan R."/>
            <person name="Costanzo M.C."/>
            <person name="Dwight S.S."/>
            <person name="Hitz B.C."/>
            <person name="Karra K."/>
            <person name="Nash R.S."/>
            <person name="Weng S."/>
            <person name="Wong E.D."/>
            <person name="Lloyd P."/>
            <person name="Skrzypek M.S."/>
            <person name="Miyasato S.R."/>
            <person name="Simison M."/>
            <person name="Cherry J.M."/>
        </authorList>
    </citation>
    <scope>GENOME REANNOTATION</scope>
    <source>
        <strain>ATCC 204508 / S288c</strain>
    </source>
</reference>
<reference key="4">
    <citation type="journal article" date="2003" name="Nature">
        <title>Global analysis of protein expression in yeast.</title>
        <authorList>
            <person name="Ghaemmaghami S."/>
            <person name="Huh W.-K."/>
            <person name="Bower K."/>
            <person name="Howson R.W."/>
            <person name="Belle A."/>
            <person name="Dephoure N."/>
            <person name="O'Shea E.K."/>
            <person name="Weissman J.S."/>
        </authorList>
    </citation>
    <scope>LEVEL OF PROTEIN EXPRESSION [LARGE SCALE ANALYSIS]</scope>
</reference>
<protein>
    <recommendedName>
        <fullName>Vacuolar protein sorting-associated protein 3</fullName>
    </recommendedName>
    <alternativeName>
        <fullName>Vacuolar protein-targeting protein 17</fullName>
    </alternativeName>
</protein>
<sequence>MVKKKTNNDKGKEVKENEGKLDIDSESSPHERENDKKKTEDDSLRATESEETNTHNANPNETVRADKFSQEESRPIEDSPHTDKNTAQESCQPSSAEDNVINTDITSLNEKTSTNDEQEKGLPLKISEGPFTISTLLDNVPSDLIYTCCEAYENHIFLGTTTGDLLHYFELERGNYMLVSQTKFDAESNSKIDKILLLPKVEGALILCDNELVLFILPEFAPRPNTTRLKGISDVVICNFSRSSKAYRIYAFHAEGVRLLKISADSLVLTKAFNFKLIDKACAHEETLMVSKLNSYELINLKSSQVIPLFRISETDEDLEPIITSFNEQSEFLVCSGGGSYDSGAMALVVNHHGDIIKGTIVLKNYPRNVIVEFPYIIAESAFQSVDIYSALPSEKSQLLQSITTSGSDLKISKSDNVFTNTNNSEEFKEKIFNKLRLEPLTHSDNKFRIERERAFVEESYEEKTSLIVYNNLGIHLLVPTPMVLRFTSCEESEIDNIEDQLKKLAKKDLTKFEHIEAKYLMSLLLFLMTLHYDHIEDEVMKKWCDFSDKVDIRILFYMFGWKVYSEIWCFHGLINIVERLKSLKLTNKCENILKMLLMMKNELKKKNKTGLLTNDFDDIMKTIDITLFKLRLEKKETITVDMFERESYDEIIREINLHDDKLPRIELLIEIYKEKGEYLKALNLLREAGDYISLVSFIEENLKKLPEDYIKERIADDLLLTLKQGDENTEECAIKKVLKILDMACINKNDFLNKIPAEETSLKVSFIEQLGVQNSNDSKFLFNYYLAKLREIINQSNIWSILGDFIKEYKDDFAYDKTDITNFIHIKLKHSLQCENFSKYYEKCENLKSENEKDDEFINFTFDEISKIDKEHILTLLFFPNELTNWVSSEELLKIYLSFNDFRSVEKYIGKQNLVAVMKQYLDISSLNYSVELVTNLLQRNFELLDDTDIQLKILETIPSVFPVQTISELLLKVLIKYQEKKEESNLRKCLLKNQISISDELSRNFDSQG</sequence>
<proteinExistence type="evidence at protein level"/>
<feature type="chain" id="PRO_0000065904" description="Vacuolar protein sorting-associated protein 3">
    <location>
        <begin position="1"/>
        <end position="1011"/>
    </location>
</feature>
<feature type="domain" description="CNH" evidence="1">
    <location>
        <begin position="143"/>
        <end position="418"/>
    </location>
</feature>
<feature type="region of interest" description="Disordered" evidence="2">
    <location>
        <begin position="1"/>
        <end position="100"/>
    </location>
</feature>
<feature type="compositionally biased region" description="Basic and acidic residues" evidence="2">
    <location>
        <begin position="1"/>
        <end position="48"/>
    </location>
</feature>
<feature type="compositionally biased region" description="Basic and acidic residues" evidence="2">
    <location>
        <begin position="63"/>
        <end position="86"/>
    </location>
</feature>
<feature type="compositionally biased region" description="Polar residues" evidence="2">
    <location>
        <begin position="87"/>
        <end position="100"/>
    </location>
</feature>